<proteinExistence type="inferred from homology"/>
<name>PTPA_STAAR</name>
<feature type="chain" id="PRO_0000300659" description="Low molecular weight protein-tyrosine-phosphatase PtpA">
    <location>
        <begin position="1"/>
        <end position="154"/>
    </location>
</feature>
<feature type="active site" description="Nucleophile" evidence="2">
    <location>
        <position position="8"/>
    </location>
</feature>
<feature type="active site" evidence="2">
    <location>
        <position position="14"/>
    </location>
</feature>
<feature type="active site" description="Proton donor" evidence="2">
    <location>
        <position position="120"/>
    </location>
</feature>
<dbReference type="EC" id="3.1.3.48"/>
<dbReference type="EMBL" id="BX571856">
    <property type="protein sequence ID" value="CAG40958.1"/>
    <property type="molecule type" value="Genomic_DNA"/>
</dbReference>
<dbReference type="RefSeq" id="WP_000228670.1">
    <property type="nucleotide sequence ID" value="NC_002952.2"/>
</dbReference>
<dbReference type="SMR" id="Q6GFH6"/>
<dbReference type="KEGG" id="sar:SAR1971"/>
<dbReference type="HOGENOM" id="CLU_071415_2_3_9"/>
<dbReference type="Proteomes" id="UP000000596">
    <property type="component" value="Chromosome"/>
</dbReference>
<dbReference type="GO" id="GO:0005576">
    <property type="term" value="C:extracellular region"/>
    <property type="evidence" value="ECO:0007669"/>
    <property type="project" value="UniProtKB-SubCell"/>
</dbReference>
<dbReference type="GO" id="GO:0004725">
    <property type="term" value="F:protein tyrosine phosphatase activity"/>
    <property type="evidence" value="ECO:0007669"/>
    <property type="project" value="UniProtKB-EC"/>
</dbReference>
<dbReference type="CDD" id="cd16343">
    <property type="entry name" value="LMWPTP"/>
    <property type="match status" value="1"/>
</dbReference>
<dbReference type="FunFam" id="3.40.50.2300:FF:000268">
    <property type="entry name" value="Low molecular weight protein-tyrosine-phosphatase PtpA"/>
    <property type="match status" value="1"/>
</dbReference>
<dbReference type="Gene3D" id="3.40.50.2300">
    <property type="match status" value="1"/>
</dbReference>
<dbReference type="InterPro" id="IPR050438">
    <property type="entry name" value="LMW_PTPase"/>
</dbReference>
<dbReference type="InterPro" id="IPR023485">
    <property type="entry name" value="Ptyr_pPase"/>
</dbReference>
<dbReference type="InterPro" id="IPR036196">
    <property type="entry name" value="Ptyr_pPase_sf"/>
</dbReference>
<dbReference type="InterPro" id="IPR017867">
    <property type="entry name" value="Tyr_phospatase_low_mol_wt"/>
</dbReference>
<dbReference type="PANTHER" id="PTHR11717:SF7">
    <property type="entry name" value="LOW MOLECULAR WEIGHT PHOSPHOTYROSINE PROTEIN PHOSPHATASE"/>
    <property type="match status" value="1"/>
</dbReference>
<dbReference type="PANTHER" id="PTHR11717">
    <property type="entry name" value="LOW MOLECULAR WEIGHT PROTEIN TYROSINE PHOSPHATASE"/>
    <property type="match status" value="1"/>
</dbReference>
<dbReference type="Pfam" id="PF01451">
    <property type="entry name" value="LMWPc"/>
    <property type="match status" value="1"/>
</dbReference>
<dbReference type="PRINTS" id="PR00719">
    <property type="entry name" value="LMWPTPASE"/>
</dbReference>
<dbReference type="SMART" id="SM00226">
    <property type="entry name" value="LMWPc"/>
    <property type="match status" value="1"/>
</dbReference>
<dbReference type="SUPFAM" id="SSF52788">
    <property type="entry name" value="Phosphotyrosine protein phosphatases I"/>
    <property type="match status" value="1"/>
</dbReference>
<protein>
    <recommendedName>
        <fullName>Low molecular weight protein-tyrosine-phosphatase PtpA</fullName>
        <ecNumber>3.1.3.48</ecNumber>
    </recommendedName>
    <alternativeName>
        <fullName>Phosphotyrosine phosphatase A</fullName>
        <shortName>PTPase A</shortName>
    </alternativeName>
</protein>
<organism>
    <name type="scientific">Staphylococcus aureus (strain MRSA252)</name>
    <dbReference type="NCBI Taxonomy" id="282458"/>
    <lineage>
        <taxon>Bacteria</taxon>
        <taxon>Bacillati</taxon>
        <taxon>Bacillota</taxon>
        <taxon>Bacilli</taxon>
        <taxon>Bacillales</taxon>
        <taxon>Staphylococcaceae</taxon>
        <taxon>Staphylococcus</taxon>
    </lineage>
</organism>
<evidence type="ECO:0000250" key="1">
    <source>
        <dbReference type="UniProtKB" id="A0A0H3K9F2"/>
    </source>
</evidence>
<evidence type="ECO:0000250" key="2">
    <source>
        <dbReference type="UniProtKB" id="P11064"/>
    </source>
</evidence>
<evidence type="ECO:0000305" key="3"/>
<sequence length="154" mass="17482">MVDVAFVCLGNICRSPMAEAIMRQRLKDRNIQDIKVHSRGTGSWNLGEPPHEGTQKILNKHNIPFDGMISELFEATDDFDYIVAMDQSNVDNIKSINPNLKGQLFKLLEFSNMEESDVPDPYYTNNFEGVYDMVLSSCDNLIDYIVKDANLKEG</sequence>
<keyword id="KW-0378">Hydrolase</keyword>
<keyword id="KW-0597">Phosphoprotein</keyword>
<keyword id="KW-0904">Protein phosphatase</keyword>
<keyword id="KW-0964">Secreted</keyword>
<accession>Q6GFH6</accession>
<gene>
    <name type="primary">ptpA</name>
    <name type="ordered locus">SAR1971</name>
</gene>
<comment type="function">
    <text evidence="1">Secreted tyrosine phosphatase that plays a critical role during infection as a bacterial effector protein that counteracts host defenses. Required for intramacrophage survival.</text>
</comment>
<comment type="catalytic activity">
    <reaction evidence="1">
        <text>O-phospho-L-tyrosyl-[protein] + H2O = L-tyrosyl-[protein] + phosphate</text>
        <dbReference type="Rhea" id="RHEA:10684"/>
        <dbReference type="Rhea" id="RHEA-COMP:10136"/>
        <dbReference type="Rhea" id="RHEA-COMP:20101"/>
        <dbReference type="ChEBI" id="CHEBI:15377"/>
        <dbReference type="ChEBI" id="CHEBI:43474"/>
        <dbReference type="ChEBI" id="CHEBI:46858"/>
        <dbReference type="ChEBI" id="CHEBI:61978"/>
        <dbReference type="EC" id="3.1.3.48"/>
    </reaction>
</comment>
<comment type="subunit">
    <text evidence="1">Interacts with host CORO1A.</text>
</comment>
<comment type="subcellular location">
    <subcellularLocation>
        <location evidence="1">Secreted</location>
    </subcellularLocation>
    <text evidence="1">Secreted intracellularly upon bacterial infection of macrophages.</text>
</comment>
<comment type="PTM">
    <text evidence="1">Phosphorylations at Tyr-122 and Tyr-123 are essential for phosphatase activity.</text>
</comment>
<comment type="similarity">
    <text evidence="3">Belongs to the low molecular weight phosphotyrosine protein phosphatase family.</text>
</comment>
<reference key="1">
    <citation type="journal article" date="2004" name="Proc. Natl. Acad. Sci. U.S.A.">
        <title>Complete genomes of two clinical Staphylococcus aureus strains: evidence for the rapid evolution of virulence and drug resistance.</title>
        <authorList>
            <person name="Holden M.T.G."/>
            <person name="Feil E.J."/>
            <person name="Lindsay J.A."/>
            <person name="Peacock S.J."/>
            <person name="Day N.P.J."/>
            <person name="Enright M.C."/>
            <person name="Foster T.J."/>
            <person name="Moore C.E."/>
            <person name="Hurst L."/>
            <person name="Atkin R."/>
            <person name="Barron A."/>
            <person name="Bason N."/>
            <person name="Bentley S.D."/>
            <person name="Chillingworth C."/>
            <person name="Chillingworth T."/>
            <person name="Churcher C."/>
            <person name="Clark L."/>
            <person name="Corton C."/>
            <person name="Cronin A."/>
            <person name="Doggett J."/>
            <person name="Dowd L."/>
            <person name="Feltwell T."/>
            <person name="Hance Z."/>
            <person name="Harris B."/>
            <person name="Hauser H."/>
            <person name="Holroyd S."/>
            <person name="Jagels K."/>
            <person name="James K.D."/>
            <person name="Lennard N."/>
            <person name="Line A."/>
            <person name="Mayes R."/>
            <person name="Moule S."/>
            <person name="Mungall K."/>
            <person name="Ormond D."/>
            <person name="Quail M.A."/>
            <person name="Rabbinowitsch E."/>
            <person name="Rutherford K.M."/>
            <person name="Sanders M."/>
            <person name="Sharp S."/>
            <person name="Simmonds M."/>
            <person name="Stevens K."/>
            <person name="Whitehead S."/>
            <person name="Barrell B.G."/>
            <person name="Spratt B.G."/>
            <person name="Parkhill J."/>
        </authorList>
    </citation>
    <scope>NUCLEOTIDE SEQUENCE [LARGE SCALE GENOMIC DNA]</scope>
    <source>
        <strain>MRSA252</strain>
    </source>
</reference>